<dbReference type="EMBL" id="CP000948">
    <property type="protein sequence ID" value="ACB04001.1"/>
    <property type="molecule type" value="Genomic_DNA"/>
</dbReference>
<dbReference type="RefSeq" id="WP_000886062.1">
    <property type="nucleotide sequence ID" value="NC_010473.1"/>
</dbReference>
<dbReference type="SMR" id="B1XEI5"/>
<dbReference type="GeneID" id="75205265"/>
<dbReference type="KEGG" id="ecd:ECDH10B_3072"/>
<dbReference type="HOGENOM" id="CLU_007884_6_1_6"/>
<dbReference type="GO" id="GO:0005737">
    <property type="term" value="C:cytoplasm"/>
    <property type="evidence" value="ECO:0007669"/>
    <property type="project" value="UniProtKB-SubCell"/>
</dbReference>
<dbReference type="GO" id="GO:0005542">
    <property type="term" value="F:folic acid binding"/>
    <property type="evidence" value="ECO:0007669"/>
    <property type="project" value="UniProtKB-UniRule"/>
</dbReference>
<dbReference type="GO" id="GO:0016226">
    <property type="term" value="P:iron-sulfur cluster assembly"/>
    <property type="evidence" value="ECO:0007669"/>
    <property type="project" value="TreeGrafter"/>
</dbReference>
<dbReference type="GO" id="GO:0009451">
    <property type="term" value="P:RNA modification"/>
    <property type="evidence" value="ECO:0007669"/>
    <property type="project" value="InterPro"/>
</dbReference>
<dbReference type="GO" id="GO:0008033">
    <property type="term" value="P:tRNA processing"/>
    <property type="evidence" value="ECO:0007669"/>
    <property type="project" value="UniProtKB-UniRule"/>
</dbReference>
<dbReference type="FunFam" id="2.40.30.160:FF:000001">
    <property type="entry name" value="tRNA-modifying protein YgfZ"/>
    <property type="match status" value="1"/>
</dbReference>
<dbReference type="FunFam" id="3.30.70.1400:FF:000002">
    <property type="entry name" value="tRNA-modifying protein YgfZ"/>
    <property type="match status" value="1"/>
</dbReference>
<dbReference type="FunFam" id="3.30.70.1630:FF:000001">
    <property type="entry name" value="tRNA-modifying protein YgfZ"/>
    <property type="match status" value="1"/>
</dbReference>
<dbReference type="Gene3D" id="2.40.30.160">
    <property type="match status" value="1"/>
</dbReference>
<dbReference type="Gene3D" id="3.30.70.1630">
    <property type="match status" value="1"/>
</dbReference>
<dbReference type="Gene3D" id="3.30.70.1400">
    <property type="entry name" value="Aminomethyltransferase beta-barrel domains"/>
    <property type="match status" value="1"/>
</dbReference>
<dbReference type="HAMAP" id="MF_01175">
    <property type="entry name" value="tRNA_modifying_YgfZ"/>
    <property type="match status" value="1"/>
</dbReference>
<dbReference type="InterPro" id="IPR006222">
    <property type="entry name" value="GCV_T_N"/>
</dbReference>
<dbReference type="InterPro" id="IPR029043">
    <property type="entry name" value="GcvT/YgfZ_C"/>
</dbReference>
<dbReference type="InterPro" id="IPR023758">
    <property type="entry name" value="tRNA-modifying_YgfZ"/>
</dbReference>
<dbReference type="InterPro" id="IPR045179">
    <property type="entry name" value="YgfZ/GcvT"/>
</dbReference>
<dbReference type="InterPro" id="IPR017703">
    <property type="entry name" value="YgfZ/GcvT_CS"/>
</dbReference>
<dbReference type="InterPro" id="IPR048451">
    <property type="entry name" value="YgfZ_barrel"/>
</dbReference>
<dbReference type="NCBIfam" id="NF007110">
    <property type="entry name" value="PRK09559.1"/>
    <property type="match status" value="1"/>
</dbReference>
<dbReference type="NCBIfam" id="TIGR03317">
    <property type="entry name" value="ygfZ_signature"/>
    <property type="match status" value="1"/>
</dbReference>
<dbReference type="PANTHER" id="PTHR22602">
    <property type="entry name" value="TRANSFERASE CAF17, MITOCHONDRIAL-RELATED"/>
    <property type="match status" value="1"/>
</dbReference>
<dbReference type="PANTHER" id="PTHR22602:SF0">
    <property type="entry name" value="TRANSFERASE CAF17, MITOCHONDRIAL-RELATED"/>
    <property type="match status" value="1"/>
</dbReference>
<dbReference type="Pfam" id="PF01571">
    <property type="entry name" value="GCV_T"/>
    <property type="match status" value="1"/>
</dbReference>
<dbReference type="Pfam" id="PF21130">
    <property type="entry name" value="YgfZ_barrel"/>
    <property type="match status" value="1"/>
</dbReference>
<dbReference type="SUPFAM" id="SSF101790">
    <property type="entry name" value="Aminomethyltransferase beta-barrel domain"/>
    <property type="match status" value="1"/>
</dbReference>
<dbReference type="SUPFAM" id="SSF103025">
    <property type="entry name" value="Folate-binding domain"/>
    <property type="match status" value="1"/>
</dbReference>
<accession>B1XEI5</accession>
<comment type="function">
    <text evidence="1">Folate-binding protein involved in regulating the level of ATP-DnaA and in the modification of some tRNAs. It is probably a key factor in regulatory networks that act via tRNA modification, such as initiation of chromosomal replication.</text>
</comment>
<comment type="subcellular location">
    <subcellularLocation>
        <location evidence="1">Cytoplasm</location>
    </subcellularLocation>
</comment>
<comment type="similarity">
    <text evidence="1">Belongs to the tRNA-modifying YgfZ family.</text>
</comment>
<reference key="1">
    <citation type="journal article" date="2008" name="J. Bacteriol.">
        <title>The complete genome sequence of Escherichia coli DH10B: insights into the biology of a laboratory workhorse.</title>
        <authorList>
            <person name="Durfee T."/>
            <person name="Nelson R."/>
            <person name="Baldwin S."/>
            <person name="Plunkett G. III"/>
            <person name="Burland V."/>
            <person name="Mau B."/>
            <person name="Petrosino J.F."/>
            <person name="Qin X."/>
            <person name="Muzny D.M."/>
            <person name="Ayele M."/>
            <person name="Gibbs R.A."/>
            <person name="Csorgo B."/>
            <person name="Posfai G."/>
            <person name="Weinstock G.M."/>
            <person name="Blattner F.R."/>
        </authorList>
    </citation>
    <scope>NUCLEOTIDE SEQUENCE [LARGE SCALE GENOMIC DNA]</scope>
    <source>
        <strain>K12 / DH10B</strain>
    </source>
</reference>
<sequence>MAFTPFPPRQPTASARLPLTLMTLDDWALATITGADSEKYMQGQVTADVSQMAEDQHLLAAHCDAKGKMWSNLRLFRDGDGFAWIERRSVREPQLTELKKYAVFSKVTIAPDDERVLLGVAGFQARAALANLFSELPSKEKQVVKEGATTLLWFEHPAERFLIVTDEATANMLTDKLRGEAELNNSQQWLALNIEAGFPVIDAANSGQFIPQATNLQALGGISFKKGCYTGQEMVARAKFRGANKRALWLLAGSASRLPEAGEDLELKMGENWRRTGTVLAAVKLEDGQVVVQVVMNNDMEPDSIFRVRDDANTLHIEPLPYSLEE</sequence>
<proteinExistence type="inferred from homology"/>
<organism>
    <name type="scientific">Escherichia coli (strain K12 / DH10B)</name>
    <dbReference type="NCBI Taxonomy" id="316385"/>
    <lineage>
        <taxon>Bacteria</taxon>
        <taxon>Pseudomonadati</taxon>
        <taxon>Pseudomonadota</taxon>
        <taxon>Gammaproteobacteria</taxon>
        <taxon>Enterobacterales</taxon>
        <taxon>Enterobacteriaceae</taxon>
        <taxon>Escherichia</taxon>
    </lineage>
</organism>
<gene>
    <name evidence="1" type="primary">ygfZ</name>
    <name type="ordered locus">ECDH10B_3072</name>
</gene>
<name>YGFZ_ECODH</name>
<protein>
    <recommendedName>
        <fullName evidence="1">tRNA-modifying protein YgfZ</fullName>
    </recommendedName>
</protein>
<evidence type="ECO:0000255" key="1">
    <source>
        <dbReference type="HAMAP-Rule" id="MF_01175"/>
    </source>
</evidence>
<feature type="chain" id="PRO_1000138073" description="tRNA-modifying protein YgfZ">
    <location>
        <begin position="1"/>
        <end position="326"/>
    </location>
</feature>
<feature type="binding site" evidence="1">
    <location>
        <position position="27"/>
    </location>
    <ligand>
        <name>folate</name>
        <dbReference type="ChEBI" id="CHEBI:62501"/>
    </ligand>
</feature>
<feature type="binding site" evidence="1">
    <location>
        <position position="189"/>
    </location>
    <ligand>
        <name>folate</name>
        <dbReference type="ChEBI" id="CHEBI:62501"/>
    </ligand>
</feature>
<keyword id="KW-0963">Cytoplasm</keyword>
<keyword id="KW-0290">Folate-binding</keyword>
<keyword id="KW-0819">tRNA processing</keyword>